<gene>
    <name evidence="1" type="primary">cmk</name>
    <name type="ordered locus">HD_1351</name>
</gene>
<dbReference type="EC" id="2.7.4.25" evidence="1"/>
<dbReference type="EMBL" id="AE017143">
    <property type="protein sequence ID" value="AAP96165.1"/>
    <property type="molecule type" value="Genomic_DNA"/>
</dbReference>
<dbReference type="RefSeq" id="WP_010945214.1">
    <property type="nucleotide sequence ID" value="NC_002940.2"/>
</dbReference>
<dbReference type="SMR" id="Q7VLS0"/>
<dbReference type="STRING" id="233412.HD_1351"/>
<dbReference type="KEGG" id="hdu:HD_1351"/>
<dbReference type="eggNOG" id="COG0283">
    <property type="taxonomic scope" value="Bacteria"/>
</dbReference>
<dbReference type="HOGENOM" id="CLU_079959_0_2_6"/>
<dbReference type="OrthoDB" id="9807434at2"/>
<dbReference type="Proteomes" id="UP000001022">
    <property type="component" value="Chromosome"/>
</dbReference>
<dbReference type="GO" id="GO:0005737">
    <property type="term" value="C:cytoplasm"/>
    <property type="evidence" value="ECO:0007669"/>
    <property type="project" value="UniProtKB-SubCell"/>
</dbReference>
<dbReference type="GO" id="GO:0005524">
    <property type="term" value="F:ATP binding"/>
    <property type="evidence" value="ECO:0007669"/>
    <property type="project" value="UniProtKB-UniRule"/>
</dbReference>
<dbReference type="GO" id="GO:0036430">
    <property type="term" value="F:CMP kinase activity"/>
    <property type="evidence" value="ECO:0007669"/>
    <property type="project" value="RHEA"/>
</dbReference>
<dbReference type="GO" id="GO:0036431">
    <property type="term" value="F:dCMP kinase activity"/>
    <property type="evidence" value="ECO:0007669"/>
    <property type="project" value="RHEA"/>
</dbReference>
<dbReference type="GO" id="GO:0006220">
    <property type="term" value="P:pyrimidine nucleotide metabolic process"/>
    <property type="evidence" value="ECO:0007669"/>
    <property type="project" value="UniProtKB-UniRule"/>
</dbReference>
<dbReference type="CDD" id="cd02020">
    <property type="entry name" value="CMPK"/>
    <property type="match status" value="1"/>
</dbReference>
<dbReference type="Gene3D" id="3.40.50.300">
    <property type="entry name" value="P-loop containing nucleotide triphosphate hydrolases"/>
    <property type="match status" value="1"/>
</dbReference>
<dbReference type="HAMAP" id="MF_00238">
    <property type="entry name" value="Cytidyl_kinase_type1"/>
    <property type="match status" value="1"/>
</dbReference>
<dbReference type="InterPro" id="IPR003136">
    <property type="entry name" value="Cytidylate_kin"/>
</dbReference>
<dbReference type="InterPro" id="IPR011994">
    <property type="entry name" value="Cytidylate_kinase_dom"/>
</dbReference>
<dbReference type="InterPro" id="IPR027417">
    <property type="entry name" value="P-loop_NTPase"/>
</dbReference>
<dbReference type="NCBIfam" id="TIGR00017">
    <property type="entry name" value="cmk"/>
    <property type="match status" value="1"/>
</dbReference>
<dbReference type="Pfam" id="PF02224">
    <property type="entry name" value="Cytidylate_kin"/>
    <property type="match status" value="1"/>
</dbReference>
<dbReference type="SUPFAM" id="SSF52540">
    <property type="entry name" value="P-loop containing nucleoside triphosphate hydrolases"/>
    <property type="match status" value="1"/>
</dbReference>
<reference key="1">
    <citation type="submission" date="2003-06" db="EMBL/GenBank/DDBJ databases">
        <title>The complete genome sequence of Haemophilus ducreyi.</title>
        <authorList>
            <person name="Munson R.S. Jr."/>
            <person name="Ray W.C."/>
            <person name="Mahairas G."/>
            <person name="Sabo P."/>
            <person name="Mungur R."/>
            <person name="Johnson L."/>
            <person name="Nguyen D."/>
            <person name="Wang J."/>
            <person name="Forst C."/>
            <person name="Hood L."/>
        </authorList>
    </citation>
    <scope>NUCLEOTIDE SEQUENCE [LARGE SCALE GENOMIC DNA]</scope>
    <source>
        <strain>35000HP / ATCC 700724</strain>
    </source>
</reference>
<sequence length="224" mass="24353">MNNFVITVDGPSGVGKGTLSAALANKLGFALLDSGAIYRISALAALRQGIAFDDEDELAKLIPTLAIEFISNNDEVTAILNGENVTTQIRSAEAGQNASKIAIFPKVRAALLQRQRDFSSPMGLIADGRDMGTIVFPDAQVKFFLEASAEERTKRRVKQLQEKGFNANFGEILAEIKTRDLRDRTRAVVPLVPAKDALLLDSTHLSIEEVISQALAHIAKFKKF</sequence>
<feature type="chain" id="PRO_0000131920" description="Cytidylate kinase">
    <location>
        <begin position="1"/>
        <end position="224"/>
    </location>
</feature>
<feature type="binding site" evidence="1">
    <location>
        <begin position="10"/>
        <end position="18"/>
    </location>
    <ligand>
        <name>ATP</name>
        <dbReference type="ChEBI" id="CHEBI:30616"/>
    </ligand>
</feature>
<keyword id="KW-0067">ATP-binding</keyword>
<keyword id="KW-0963">Cytoplasm</keyword>
<keyword id="KW-0418">Kinase</keyword>
<keyword id="KW-0547">Nucleotide-binding</keyword>
<keyword id="KW-1185">Reference proteome</keyword>
<keyword id="KW-0808">Transferase</keyword>
<evidence type="ECO:0000255" key="1">
    <source>
        <dbReference type="HAMAP-Rule" id="MF_00238"/>
    </source>
</evidence>
<proteinExistence type="inferred from homology"/>
<protein>
    <recommendedName>
        <fullName evidence="1">Cytidylate kinase</fullName>
        <shortName evidence="1">CK</shortName>
        <ecNumber evidence="1">2.7.4.25</ecNumber>
    </recommendedName>
    <alternativeName>
        <fullName evidence="1">Cytidine monophosphate kinase</fullName>
        <shortName evidence="1">CMP kinase</shortName>
    </alternativeName>
</protein>
<name>KCY_HAEDU</name>
<accession>Q7VLS0</accession>
<comment type="catalytic activity">
    <reaction evidence="1">
        <text>CMP + ATP = CDP + ADP</text>
        <dbReference type="Rhea" id="RHEA:11600"/>
        <dbReference type="ChEBI" id="CHEBI:30616"/>
        <dbReference type="ChEBI" id="CHEBI:58069"/>
        <dbReference type="ChEBI" id="CHEBI:60377"/>
        <dbReference type="ChEBI" id="CHEBI:456216"/>
        <dbReference type="EC" id="2.7.4.25"/>
    </reaction>
</comment>
<comment type="catalytic activity">
    <reaction evidence="1">
        <text>dCMP + ATP = dCDP + ADP</text>
        <dbReference type="Rhea" id="RHEA:25094"/>
        <dbReference type="ChEBI" id="CHEBI:30616"/>
        <dbReference type="ChEBI" id="CHEBI:57566"/>
        <dbReference type="ChEBI" id="CHEBI:58593"/>
        <dbReference type="ChEBI" id="CHEBI:456216"/>
        <dbReference type="EC" id="2.7.4.25"/>
    </reaction>
</comment>
<comment type="subcellular location">
    <subcellularLocation>
        <location evidence="1">Cytoplasm</location>
    </subcellularLocation>
</comment>
<comment type="similarity">
    <text evidence="1">Belongs to the cytidylate kinase family. Type 1 subfamily.</text>
</comment>
<organism>
    <name type="scientific">Haemophilus ducreyi (strain 35000HP / ATCC 700724)</name>
    <dbReference type="NCBI Taxonomy" id="233412"/>
    <lineage>
        <taxon>Bacteria</taxon>
        <taxon>Pseudomonadati</taxon>
        <taxon>Pseudomonadota</taxon>
        <taxon>Gammaproteobacteria</taxon>
        <taxon>Pasteurellales</taxon>
        <taxon>Pasteurellaceae</taxon>
        <taxon>Haemophilus</taxon>
    </lineage>
</organism>